<organism>
    <name type="scientific">Caenorhabditis elegans</name>
    <dbReference type="NCBI Taxonomy" id="6239"/>
    <lineage>
        <taxon>Eukaryota</taxon>
        <taxon>Metazoa</taxon>
        <taxon>Ecdysozoa</taxon>
        <taxon>Nematoda</taxon>
        <taxon>Chromadorea</taxon>
        <taxon>Rhabditida</taxon>
        <taxon>Rhabditina</taxon>
        <taxon>Rhabditomorpha</taxon>
        <taxon>Rhabditoidea</taxon>
        <taxon>Rhabditidae</taxon>
        <taxon>Peloderinae</taxon>
        <taxon>Caenorhabditis</taxon>
    </lineage>
</organism>
<dbReference type="EMBL" id="L26545">
    <property type="protein sequence ID" value="AAA20080.1"/>
    <property type="molecule type" value="Genomic_DNA"/>
</dbReference>
<dbReference type="EMBL" id="Z29443">
    <property type="protein sequence ID" value="CAA82573.2"/>
    <property type="molecule type" value="Genomic_DNA"/>
</dbReference>
<dbReference type="PIR" id="A53189">
    <property type="entry name" value="A53189"/>
</dbReference>
<dbReference type="PIR" id="H88578">
    <property type="entry name" value="H88578"/>
</dbReference>
<dbReference type="RefSeq" id="NP_499284.1">
    <property type="nucleotide sequence ID" value="NM_066883.7"/>
</dbReference>
<dbReference type="PDB" id="1OHU">
    <property type="method" value="X-ray"/>
    <property type="resolution" value="2.03 A"/>
    <property type="chains" value="A/B=68-242"/>
</dbReference>
<dbReference type="PDB" id="1TY4">
    <property type="method" value="X-ray"/>
    <property type="resolution" value="2.20 A"/>
    <property type="chains" value="A/B=68-237"/>
</dbReference>
<dbReference type="PDB" id="2A5Y">
    <property type="method" value="X-ray"/>
    <property type="resolution" value="2.60 A"/>
    <property type="chains" value="A=48-251"/>
</dbReference>
<dbReference type="PDBsum" id="1OHU"/>
<dbReference type="PDBsum" id="1TY4"/>
<dbReference type="PDBsum" id="2A5Y"/>
<dbReference type="SMR" id="P41958"/>
<dbReference type="BioGRID" id="533094">
    <property type="interactions" value="16"/>
</dbReference>
<dbReference type="ComplexPortal" id="CPX-1359">
    <property type="entry name" value="ced-4-ced-9-mac-1 complex"/>
</dbReference>
<dbReference type="ComplexPortal" id="CPX-398">
    <property type="entry name" value="ced-9-egl-1 complex"/>
</dbReference>
<dbReference type="ComplexPortal" id="CPX-399">
    <property type="entry name" value="ced-9-ced-4 complex"/>
</dbReference>
<dbReference type="DIP" id="DIP-250N"/>
<dbReference type="ELM" id="P41958"/>
<dbReference type="FunCoup" id="P41958">
    <property type="interactions" value="13"/>
</dbReference>
<dbReference type="IntAct" id="P41958">
    <property type="interactions" value="4"/>
</dbReference>
<dbReference type="STRING" id="6239.T07C4.8.1"/>
<dbReference type="TCDB" id="1.A.21.1.12">
    <property type="family name" value="the bcl-2 (bcl-2) family"/>
</dbReference>
<dbReference type="iPTMnet" id="P41958"/>
<dbReference type="PaxDb" id="6239-T07C4.8"/>
<dbReference type="PeptideAtlas" id="P41958"/>
<dbReference type="EnsemblMetazoa" id="T07C4.8.1">
    <property type="protein sequence ID" value="T07C4.8.1"/>
    <property type="gene ID" value="WBGene00000423"/>
</dbReference>
<dbReference type="GeneID" id="3565776"/>
<dbReference type="KEGG" id="cel:CELE_T07C4.8"/>
<dbReference type="UCSC" id="T07C4.8.1">
    <property type="organism name" value="c. elegans"/>
</dbReference>
<dbReference type="AGR" id="WB:WBGene00000423"/>
<dbReference type="CTD" id="3565776"/>
<dbReference type="WormBase" id="T07C4.8">
    <property type="protein sequence ID" value="CE25104"/>
    <property type="gene ID" value="WBGene00000423"/>
    <property type="gene designation" value="ced-9"/>
</dbReference>
<dbReference type="eggNOG" id="KOG4728">
    <property type="taxonomic scope" value="Eukaryota"/>
</dbReference>
<dbReference type="GeneTree" id="ENSGT01130000278332"/>
<dbReference type="HOGENOM" id="CLU_1046733_0_0_1"/>
<dbReference type="InParanoid" id="P41958"/>
<dbReference type="OMA" id="IALTWPH"/>
<dbReference type="OrthoDB" id="6021377at2759"/>
<dbReference type="PhylomeDB" id="P41958"/>
<dbReference type="Reactome" id="R-CEL-111453">
    <property type="pathway name" value="BH3-only proteins associate with and inactivate anti-apoptotic BCL-2 members"/>
</dbReference>
<dbReference type="Reactome" id="R-CEL-9648002">
    <property type="pathway name" value="RAS processing"/>
</dbReference>
<dbReference type="EvolutionaryTrace" id="P41958"/>
<dbReference type="PRO" id="PR:P41958"/>
<dbReference type="Proteomes" id="UP000001940">
    <property type="component" value="Chromosome III"/>
</dbReference>
<dbReference type="Bgee" id="WBGene00000423">
    <property type="expression patterns" value="Expressed in embryo and 5 other cell types or tissues"/>
</dbReference>
<dbReference type="GO" id="GO:0005737">
    <property type="term" value="C:cytoplasm"/>
    <property type="evidence" value="ECO:0000314"/>
    <property type="project" value="UniProtKB"/>
</dbReference>
<dbReference type="GO" id="GO:0012505">
    <property type="term" value="C:endomembrane system"/>
    <property type="evidence" value="ECO:0007669"/>
    <property type="project" value="UniProtKB-SubCell"/>
</dbReference>
<dbReference type="GO" id="GO:0016020">
    <property type="term" value="C:membrane"/>
    <property type="evidence" value="ECO:0000314"/>
    <property type="project" value="WormBase"/>
</dbReference>
<dbReference type="GO" id="GO:0005741">
    <property type="term" value="C:mitochondrial outer membrane"/>
    <property type="evidence" value="ECO:0000314"/>
    <property type="project" value="WormBase"/>
</dbReference>
<dbReference type="GO" id="GO:0005739">
    <property type="term" value="C:mitochondrion"/>
    <property type="evidence" value="ECO:0000314"/>
    <property type="project" value="WormBase"/>
</dbReference>
<dbReference type="GO" id="GO:0043025">
    <property type="term" value="C:neuronal cell body"/>
    <property type="evidence" value="ECO:0000314"/>
    <property type="project" value="UniProtKB"/>
</dbReference>
<dbReference type="GO" id="GO:0031090">
    <property type="term" value="C:organelle membrane"/>
    <property type="evidence" value="ECO:0000314"/>
    <property type="project" value="WormBase"/>
</dbReference>
<dbReference type="GO" id="GO:0043204">
    <property type="term" value="C:perikaryon"/>
    <property type="evidence" value="ECO:0007669"/>
    <property type="project" value="UniProtKB-SubCell"/>
</dbReference>
<dbReference type="GO" id="GO:0048471">
    <property type="term" value="C:perinuclear region of cytoplasm"/>
    <property type="evidence" value="ECO:0000314"/>
    <property type="project" value="WormBase"/>
</dbReference>
<dbReference type="GO" id="GO:0098793">
    <property type="term" value="C:presynapse"/>
    <property type="evidence" value="ECO:0000314"/>
    <property type="project" value="UniProtKB"/>
</dbReference>
<dbReference type="GO" id="GO:0015267">
    <property type="term" value="F:channel activity"/>
    <property type="evidence" value="ECO:0000318"/>
    <property type="project" value="GO_Central"/>
</dbReference>
<dbReference type="GO" id="GO:0005096">
    <property type="term" value="F:GTPase activator activity"/>
    <property type="evidence" value="ECO:0000314"/>
    <property type="project" value="WormBase"/>
</dbReference>
<dbReference type="GO" id="GO:0140311">
    <property type="term" value="F:protein sequestering activity"/>
    <property type="evidence" value="ECO:0000314"/>
    <property type="project" value="UniProtKB"/>
</dbReference>
<dbReference type="GO" id="GO:0030042">
    <property type="term" value="P:actin filament depolymerization"/>
    <property type="evidence" value="ECO:0000315"/>
    <property type="project" value="UniProtKB"/>
</dbReference>
<dbReference type="GO" id="GO:0006915">
    <property type="term" value="P:apoptotic process"/>
    <property type="evidence" value="ECO:0000315"/>
    <property type="project" value="UniProtKB"/>
</dbReference>
<dbReference type="GO" id="GO:1902742">
    <property type="term" value="P:apoptotic process involved in development"/>
    <property type="evidence" value="ECO:0000315"/>
    <property type="project" value="UniProtKB"/>
</dbReference>
<dbReference type="GO" id="GO:0050829">
    <property type="term" value="P:defense response to Gram-negative bacterium"/>
    <property type="evidence" value="ECO:0000315"/>
    <property type="project" value="UniProtKB"/>
</dbReference>
<dbReference type="GO" id="GO:0097192">
    <property type="term" value="P:extrinsic apoptotic signaling pathway in absence of ligand"/>
    <property type="evidence" value="ECO:0000318"/>
    <property type="project" value="GO_Central"/>
</dbReference>
<dbReference type="GO" id="GO:0008630">
    <property type="term" value="P:intrinsic apoptotic signaling pathway in response to DNA damage"/>
    <property type="evidence" value="ECO:0000318"/>
    <property type="project" value="GO_Central"/>
</dbReference>
<dbReference type="GO" id="GO:0000423">
    <property type="term" value="P:mitophagy"/>
    <property type="evidence" value="ECO:0000315"/>
    <property type="project" value="WormBase"/>
</dbReference>
<dbReference type="GO" id="GO:0043066">
    <property type="term" value="P:negative regulation of apoptotic process"/>
    <property type="evidence" value="ECO:0000315"/>
    <property type="project" value="WormBase"/>
</dbReference>
<dbReference type="GO" id="GO:1900118">
    <property type="term" value="P:negative regulation of execution phase of apoptosis"/>
    <property type="evidence" value="ECO:0000315"/>
    <property type="project" value="ComplexPortal"/>
</dbReference>
<dbReference type="GO" id="GO:0043069">
    <property type="term" value="P:negative regulation of programmed cell death"/>
    <property type="evidence" value="ECO:0000315"/>
    <property type="project" value="WormBase"/>
</dbReference>
<dbReference type="GO" id="GO:0031333">
    <property type="term" value="P:negative regulation of protein-containing complex assembly"/>
    <property type="evidence" value="ECO:0000314"/>
    <property type="project" value="UniProtKB"/>
</dbReference>
<dbReference type="GO" id="GO:0043065">
    <property type="term" value="P:positive regulation of apoptotic process"/>
    <property type="evidence" value="ECO:0000269"/>
    <property type="project" value="ComplexPortal"/>
</dbReference>
<dbReference type="GO" id="GO:0010636">
    <property type="term" value="P:positive regulation of mitochondrial fusion"/>
    <property type="evidence" value="ECO:0000315"/>
    <property type="project" value="WormBase"/>
</dbReference>
<dbReference type="GO" id="GO:1905808">
    <property type="term" value="P:positive regulation of synapse pruning"/>
    <property type="evidence" value="ECO:0000315"/>
    <property type="project" value="UniProtKB"/>
</dbReference>
<dbReference type="GO" id="GO:0016485">
    <property type="term" value="P:protein processing"/>
    <property type="evidence" value="ECO:0000314"/>
    <property type="project" value="UniProtKB"/>
</dbReference>
<dbReference type="GO" id="GO:0050807">
    <property type="term" value="P:regulation of synapse organization"/>
    <property type="evidence" value="ECO:0000316"/>
    <property type="project" value="UniProtKB"/>
</dbReference>
<dbReference type="GO" id="GO:0001836">
    <property type="term" value="P:release of cytochrome c from mitochondria"/>
    <property type="evidence" value="ECO:0000318"/>
    <property type="project" value="GO_Central"/>
</dbReference>
<dbReference type="CDD" id="cd06845">
    <property type="entry name" value="Bcl-2_like"/>
    <property type="match status" value="1"/>
</dbReference>
<dbReference type="FunFam" id="1.10.437.10:FF:000022">
    <property type="entry name" value="Apoptosis regulator ced-9"/>
    <property type="match status" value="1"/>
</dbReference>
<dbReference type="Gene3D" id="1.10.437.10">
    <property type="entry name" value="Blc2-like"/>
    <property type="match status" value="1"/>
</dbReference>
<dbReference type="InterPro" id="IPR036834">
    <property type="entry name" value="Bcl-2-like_sf"/>
</dbReference>
<dbReference type="InterPro" id="IPR046371">
    <property type="entry name" value="Bcl-2_BH1-3"/>
</dbReference>
<dbReference type="InterPro" id="IPR026298">
    <property type="entry name" value="Bcl-2_fam"/>
</dbReference>
<dbReference type="InterPro" id="IPR002475">
    <property type="entry name" value="Bcl2-like"/>
</dbReference>
<dbReference type="InterPro" id="IPR020717">
    <property type="entry name" value="Bcl2_BH1_motif_CS"/>
</dbReference>
<dbReference type="InterPro" id="IPR003093">
    <property type="entry name" value="Bcl2_BH4"/>
</dbReference>
<dbReference type="PANTHER" id="PTHR11256:SF50">
    <property type="entry name" value="APOPTOSIS REGULATOR CED-9"/>
    <property type="match status" value="1"/>
</dbReference>
<dbReference type="PANTHER" id="PTHR11256">
    <property type="entry name" value="BCL-2 RELATED"/>
    <property type="match status" value="1"/>
</dbReference>
<dbReference type="Pfam" id="PF00452">
    <property type="entry name" value="Bcl-2"/>
    <property type="match status" value="1"/>
</dbReference>
<dbReference type="Pfam" id="PF02180">
    <property type="entry name" value="BH4"/>
    <property type="match status" value="1"/>
</dbReference>
<dbReference type="SMART" id="SM00337">
    <property type="entry name" value="BCL"/>
    <property type="match status" value="1"/>
</dbReference>
<dbReference type="SMART" id="SM00265">
    <property type="entry name" value="BH4"/>
    <property type="match status" value="1"/>
</dbReference>
<dbReference type="SUPFAM" id="SSF56854">
    <property type="entry name" value="Bcl-2 inhibitors of programmed cell death"/>
    <property type="match status" value="1"/>
</dbReference>
<dbReference type="PROSITE" id="PS50062">
    <property type="entry name" value="BCL2_FAMILY"/>
    <property type="match status" value="1"/>
</dbReference>
<dbReference type="PROSITE" id="PS01080">
    <property type="entry name" value="BH1"/>
    <property type="match status" value="1"/>
</dbReference>
<dbReference type="PROSITE" id="PS50063">
    <property type="entry name" value="BH4_2"/>
    <property type="match status" value="1"/>
</dbReference>
<sequence>MTRCTADNSLTNPAYRRRTMATGEMKEFLGIKGTEPTDFGINSDAQDLPSPSRQASTRRMSIGESIDGKINDWEEPRLDIEGFVVDYFTHRIRQNGMEWFGAPGLPCGVQPEHEMMRVMGTIFEKKHAENFETFCEQLLAVPRISFSLYQDVVRTVGNAQTDQCPMSYGRLIGLISFGGFVAAKMMESVELQGQVRNLFVYTSLFIKTRIRNNWKEHNRSWDDFMTLGKQMKEDYERAEAEKVGRRKQNRRWSMIGAGVTAGAIGIVGVVVCGRMMFSLK</sequence>
<evidence type="ECO:0000255" key="1"/>
<evidence type="ECO:0000255" key="2">
    <source>
        <dbReference type="PROSITE-ProRule" id="PRU00025"/>
    </source>
</evidence>
<evidence type="ECO:0000256" key="3">
    <source>
        <dbReference type="SAM" id="MobiDB-lite"/>
    </source>
</evidence>
<evidence type="ECO:0000269" key="4">
    <source>
    </source>
</evidence>
<evidence type="ECO:0000269" key="5">
    <source>
    </source>
</evidence>
<evidence type="ECO:0000269" key="6">
    <source>
    </source>
</evidence>
<evidence type="ECO:0000269" key="7">
    <source>
    </source>
</evidence>
<evidence type="ECO:0000269" key="8">
    <source>
    </source>
</evidence>
<evidence type="ECO:0000269" key="9">
    <source>
    </source>
</evidence>
<evidence type="ECO:0000269" key="10">
    <source>
    </source>
</evidence>
<evidence type="ECO:0000269" key="11">
    <source>
    </source>
</evidence>
<evidence type="ECO:0000269" key="12">
    <source>
    </source>
</evidence>
<evidence type="ECO:0000269" key="13">
    <source>
    </source>
</evidence>
<evidence type="ECO:0000269" key="14">
    <source>
    </source>
</evidence>
<evidence type="ECO:0000269" key="15">
    <source>
    </source>
</evidence>
<evidence type="ECO:0000269" key="16">
    <source>
    </source>
</evidence>
<evidence type="ECO:0000269" key="17">
    <source>
    </source>
</evidence>
<evidence type="ECO:0000269" key="18">
    <source>
    </source>
</evidence>
<evidence type="ECO:0000305" key="19"/>
<evidence type="ECO:0007829" key="20">
    <source>
        <dbReference type="PDB" id="1OHU"/>
    </source>
</evidence>
<evidence type="ECO:0007829" key="21">
    <source>
        <dbReference type="PDB" id="2A5Y"/>
    </source>
</evidence>
<accession>P41958</accession>
<gene>
    <name type="primary">ced-9</name>
    <name type="ORF">T07C4.8</name>
</gene>
<reference key="1">
    <citation type="journal article" date="1994" name="Cell">
        <title>C. elegans cell survival gene ced-9 encodes a functional homolog of the mammalian proto-oncogene bcl-2.</title>
        <authorList>
            <person name="Hengartner M.O."/>
            <person name="Horvitz H.R."/>
        </authorList>
    </citation>
    <scope>NUCLEOTIDE SEQUENCE [GENOMIC DNA]</scope>
    <scope>FUNCTION</scope>
    <scope>DEVELOPMENTAL STAGE</scope>
    <source>
        <strain>Bristol N2</strain>
    </source>
</reference>
<reference key="2">
    <citation type="journal article" date="1998" name="Science">
        <title>Genome sequence of the nematode C. elegans: a platform for investigating biology.</title>
        <authorList>
            <consortium name="The C. elegans sequencing consortium"/>
        </authorList>
    </citation>
    <scope>NUCLEOTIDE SEQUENCE [LARGE SCALE GENOMIC DNA]</scope>
    <source>
        <strain>Bristol N2</strain>
    </source>
</reference>
<reference key="3">
    <citation type="journal article" date="1997" name="Nature">
        <title>Interaction between the C. elegans cell-death regulators CED-9 and CED-4.</title>
        <authorList>
            <person name="Spector M.S."/>
            <person name="Desnoyers S."/>
            <person name="Hoeppner D.J."/>
            <person name="Hengartner M.O."/>
        </authorList>
    </citation>
    <scope>FUNCTION</scope>
    <scope>INTERACTION WITH CED-4</scope>
    <scope>MUTAGENESIS OF TYR-149 AND GLY-169</scope>
    <source>
        <strain>Bristol N2</strain>
    </source>
</reference>
<reference key="4">
    <citation type="journal article" date="1997" name="Science">
        <title>Interaction and regulation of subcellular localization of CED-4 by CED-9.</title>
        <authorList>
            <person name="Wu D."/>
            <person name="Wallen H.D."/>
            <person name="Nunez G."/>
        </authorList>
    </citation>
    <scope>FUNCTION</scope>
    <scope>SUBCELLULAR LOCATION</scope>
    <scope>INTERACTION WITH CED-4</scope>
</reference>
<reference key="5">
    <citation type="journal article" date="1998" name="Cell">
        <title>The C. elegans protein EGL-1 is required for programmed cell death and interacts with the Bcl-2-like protein CED-9.</title>
        <authorList>
            <person name="Conradt B."/>
            <person name="Horvitz H.R."/>
        </authorList>
    </citation>
    <scope>FUNCTION</scope>
    <scope>INTERACTION WITH EGL-1</scope>
</reference>
<reference key="6">
    <citation type="journal article" date="1999" name="Development">
        <title>C. elegans MAC-1, an essential member of the AAA family of ATPases, can bind CED-4 and prevent cell death.</title>
        <authorList>
            <person name="Wu D."/>
            <person name="Chen P.J."/>
            <person name="Chen S."/>
            <person name="Hu Y."/>
            <person name="Nunez G."/>
            <person name="Ellis R.E."/>
        </authorList>
    </citation>
    <scope>IDENTIFICATION IN A CED-3; CED-4 AND MAC-1 COMPLEX</scope>
</reference>
<reference key="7">
    <citation type="journal article" date="2000" name="Oncogene">
        <title>The C. elegans orthologue ceBNIP3 interacts with CED-9 and CED-3 but kills through a BH3- and caspase-independent mechanism.</title>
        <authorList>
            <person name="Cizeau J."/>
            <person name="Ray R."/>
            <person name="Chen G."/>
            <person name="Gietz R.D."/>
            <person name="Greenberg A.H."/>
        </authorList>
    </citation>
    <scope>INTERACTION WITH DCT-1</scope>
</reference>
<reference key="8">
    <citation type="journal article" date="2000" name="Science">
        <title>Translocation of C. elegans CED-4 to nuclear membranes during programmed cell death.</title>
        <authorList>
            <person name="Chen F."/>
            <person name="Hersh B.M."/>
            <person name="Conradt B."/>
            <person name="Zhou Z."/>
            <person name="Riemer D."/>
            <person name="Gruenbaum Y."/>
            <person name="Horvitz H.R."/>
        </authorList>
    </citation>
    <scope>FUNCTION</scope>
    <scope>SUBCELLULAR LOCATION</scope>
</reference>
<reference key="9">
    <citation type="journal article" date="2009" name="Curr. Biol.">
        <title>Bcl-2 proteins EGL-1 and CED-9 do not regulate mitochondrial fission or fusion in Caenorhabditis elegans.</title>
        <authorList>
            <person name="Breckenridge D.G."/>
            <person name="Kang B.H."/>
            <person name="Xue D."/>
        </authorList>
    </citation>
    <scope>FUNCTION</scope>
    <scope>MUTAGENESIS OF 46-GLN--LYS-280; TYR-149 AND GLY-169</scope>
</reference>
<reference key="10">
    <citation type="journal article" date="2011" name="Proc. Natl. Acad. Sci. U.S.A.">
        <title>A molecular switch that governs mitochondrial fusion and fission mediated by the BCL2-like protein CED-9 of Caenorhabditis elegans.</title>
        <authorList>
            <person name="Lu Y."/>
            <person name="Rolland S.G."/>
            <person name="Conradt B."/>
        </authorList>
    </citation>
    <scope>FUNCTION</scope>
    <scope>INTERACTION WITH DRP-1; FZ0-1 AND EGL-1</scope>
    <scope>MUTAGENESIS OF 158-ASN--GLN-160 AND 211-ARG-ASN-212</scope>
</reference>
<reference key="11">
    <citation type="journal article" date="2013" name="Proc. Natl. Acad. Sci. U.S.A.">
        <title>Related F-box proteins control cell death in Caenorhabditis elegans and human lymphoma.</title>
        <authorList>
            <person name="Chiorazzi M."/>
            <person name="Rui L."/>
            <person name="Yang Y."/>
            <person name="Ceribelli M."/>
            <person name="Tishbi N."/>
            <person name="Maurer C.W."/>
            <person name="Ranuncolo S.M."/>
            <person name="Zhao H."/>
            <person name="Xu W."/>
            <person name="Chan W.C."/>
            <person name="Jaffe E.S."/>
            <person name="Gascoyne R.D."/>
            <person name="Campo E."/>
            <person name="Rosenwald A."/>
            <person name="Ott G."/>
            <person name="Delabie J."/>
            <person name="Rimsza L.M."/>
            <person name="Shaham S."/>
            <person name="Staudt L.M."/>
        </authorList>
    </citation>
    <scope>INTERACTION WITH DRE-1</scope>
</reference>
<reference key="12">
    <citation type="journal article" date="2015" name="Cell Rep.">
        <title>The cell death pathway regulates synapse elimination through cleavage of gelsolin in Caenorhabditis elegans neurons.</title>
        <authorList>
            <person name="Meng L."/>
            <person name="Mulcahy B."/>
            <person name="Cook S.J."/>
            <person name="Neubauer M."/>
            <person name="Wan A."/>
            <person name="Jin Y."/>
            <person name="Yan D."/>
        </authorList>
    </citation>
    <scope>FUNCTION</scope>
    <scope>SUBCELLULAR LOCATION</scope>
    <scope>MUTAGENESIS OF TYR-149 AND GLY-169</scope>
</reference>
<reference key="13">
    <citation type="journal article" date="2003" name="Cell Death Differ.">
        <title>Unique structural features of a BCL-2 family protein CED-9 and biophysical characterization of CED-9/EGL-1 interactions.</title>
        <authorList>
            <person name="Woo J.-S."/>
            <person name="Jung J.-S."/>
            <person name="Ha N.-C."/>
            <person name="Shin J."/>
            <person name="Kin K.-H."/>
            <person name="Lee W."/>
            <person name="Oh B.-H."/>
        </authorList>
    </citation>
    <scope>X-RAY CRYSTALLOGRAPHY (2.03 ANGSTROMS) OF 68-242 IN COMPLEX WITH EGL-1</scope>
    <scope>FUNCTION</scope>
</reference>
<reference key="14">
    <citation type="journal article" date="2004" name="Mol. Cell">
        <title>Structural, biochemical, and functional analyses of CED-9 recognition by the proapoptotic proteins EGL-1 and CED-4.</title>
        <authorList>
            <person name="Yan N."/>
            <person name="Gu L."/>
            <person name="Kokel D."/>
            <person name="Chai J."/>
            <person name="Li W."/>
            <person name="Han A."/>
            <person name="Chen L."/>
            <person name="Xue D."/>
            <person name="Shi Y."/>
        </authorList>
    </citation>
    <scope>X-RAY CRYSTALLOGRAPHY (2.2 ANGSTROMS) OF 68-237 IN COMPLEX WITH EGL-1</scope>
    <scope>FUNCTION</scope>
    <scope>INTERACTION WITH CED-4</scope>
</reference>
<reference key="15">
    <citation type="journal article" date="2005" name="Nature">
        <title>Structure of the CED-4-CED-9 complex provides insights into programmed cell death in Caenorhabditis elegans.</title>
        <authorList>
            <person name="Yan N."/>
            <person name="Chai J."/>
            <person name="Lee E.S."/>
            <person name="Gu L."/>
            <person name="Liu Q."/>
            <person name="He J."/>
            <person name="Wu J.W."/>
            <person name="Kokel D."/>
            <person name="Li H."/>
            <person name="Hao Q."/>
            <person name="Xue D."/>
            <person name="Shi Y."/>
        </authorList>
    </citation>
    <scope>X-RAY CRYSTALLOGRAPHY (2.60 ANGSTROMS) OF 48-251 IN COMPLEX WITH CED-4</scope>
    <scope>FUNCTION</scope>
</reference>
<reference key="16">
    <citation type="journal article" date="2006" name="Development">
        <title>Pax2/5/8 proteins promote cell survival in C. elegans.</title>
        <authorList>
            <person name="Park D."/>
            <person name="Jia H."/>
            <person name="Rajakumar V."/>
            <person name="Chamberlin H.M."/>
        </authorList>
    </citation>
    <scope>SUBCELLULAR LOCATION</scope>
    <scope>DEVELOPMENTAL STAGE</scope>
</reference>
<keyword id="KW-0002">3D-structure</keyword>
<keyword id="KW-0053">Apoptosis</keyword>
<keyword id="KW-0963">Cytoplasm</keyword>
<keyword id="KW-0472">Membrane</keyword>
<keyword id="KW-0496">Mitochondrion</keyword>
<keyword id="KW-1185">Reference proteome</keyword>
<keyword id="KW-0770">Synapse</keyword>
<comment type="function">
    <text evidence="5 8 14 15 16 17 18">Plays a major role in programmed cell death (PCD, apoptosis) (PubMed:10688797, PubMed:7907274). egl-1 binds to and directly inhibits the activity of ced-9, releasing the cell death activator ced-4 from a ced-9/ced-4 containing protein complex and allowing ced-4 to activate the cell-killing caspase ced-3 (PubMed:12894216, PubMed:15383288, PubMed:16208361, PubMed:9024666, PubMed:9027313, PubMed:9604928). During larval development, required for the elimination of transient presynaptic components downstream of egl-1 and upstream of ced-4 and ced-3 apoptotic pathway (PubMed:26074078). Has been shown in one study to be dispensable in mitochondrial dynamics and morphology during early embryonic development (PubMed:19327994). However, another study shows that a egl-1/ced-9 containing complex may promote drp-1-dependent mitochondrial fission (PubMed:21949250).</text>
</comment>
<comment type="subunit">
    <text evidence="4 6 7 8 9 12 13 16 17 18">Interacts with asymmetric homodimer ced-4; the interaction sequesters ced-4 (PubMed:15383288, PubMed:16208361, PubMed:9024666, PubMed:9027313). Interacts with egl-1; the interaction results in ced-4 release (PubMed:12894216, PubMed:15383288, PubMed:9604928). Interacts with dre-1; the interaction inhibits ced-9 activity, either directly or indirectly (PubMed:23431138). Interacts with dct-1 (PubMed:11114722). May form a complex composed of ced-9, ced-4 and mac-1 (PubMed:10101135). Interacts with dynamin-related protein drp-1 (via residues 280-502); the interaction is enhanced by GTP rather than GDP; the interaction is probably direct and may occur at the mitochondrion (PubMed:21949250). Interaction with drp-1 may be enhanced by interaction of ced-9 with egl-1, but not with ced-4 (PubMed:21949250). A ced-9/egl-1 complex may recruit drp-1 to the mitochondrial surface (PubMed:21949250). Interacts with fzo-1; interaction may be suppressed by interaction of ced-9 with egl-1 (PubMed:21949250).</text>
</comment>
<comment type="interaction">
    <interactant intactId="EBI-494110">
        <id>P41958</id>
    </interactant>
    <interactant intactId="EBI-494247">
        <id>P42573</id>
        <label>ced-3</label>
    </interactant>
    <organismsDiffer>false</organismsDiffer>
    <experiments>4</experiments>
</comment>
<comment type="interaction">
    <interactant intactId="EBI-494110">
        <id>P41958</id>
    </interactant>
    <interactant intactId="EBI-494118">
        <id>P30429</id>
        <label>ced-4</label>
    </interactant>
    <organismsDiffer>false</organismsDiffer>
    <experiments>17</experiments>
</comment>
<comment type="interaction">
    <interactant intactId="EBI-494110">
        <id>P41958</id>
    </interactant>
    <interactant intactId="EBI-536271">
        <id>P30429-2</id>
        <label>ced-4</label>
    </interactant>
    <organismsDiffer>false</organismsDiffer>
    <experiments>5</experiments>
</comment>
<comment type="interaction">
    <interactant intactId="EBI-494110">
        <id>P41958</id>
    </interactant>
    <interactant intactId="EBI-495949">
        <id>O61667</id>
        <label>egl-1</label>
    </interactant>
    <organismsDiffer>false</organismsDiffer>
    <experiments>7</experiments>
</comment>
<comment type="subcellular location">
    <subcellularLocation>
        <location evidence="14">Perikaryon</location>
    </subcellularLocation>
    <subcellularLocation>
        <location evidence="14">Synapse</location>
    </subcellularLocation>
    <subcellularLocation>
        <location evidence="5 17">Endomembrane system</location>
        <topology>Peripheral membrane protein</topology>
    </subcellularLocation>
    <subcellularLocation>
        <location evidence="5 17">Mitochondrion membrane</location>
        <topology evidence="5 17">Peripheral membrane protein</topology>
    </subcellularLocation>
    <subcellularLocation>
        <location evidence="10">Cytoplasm</location>
    </subcellularLocation>
    <text evidence="14">Intracellular membranes, mitochondrial, and perinuclear region (PubMed:10688797, PubMed:9027313). Localizes to synapses of DD motor neurons (PubMed:26074078). Synaptic localization is dependent on axonal mitochondria (PubMed:26074078).</text>
</comment>
<comment type="developmental stage">
    <text evidence="10 15">Abundant expression is seen in embryos and adults (PubMed:7907274). Expressed in embryos prior to elongation, at comma stage, at 1.5-fold stage and in adult gonad (PubMed:17021039).</text>
</comment>
<comment type="similarity">
    <text evidence="19">Belongs to the Bcl-2 family.</text>
</comment>
<comment type="caution">
    <text evidence="11 12">Dispensable in mitochondrial dynamics and morphology during early embryonic development (PubMed:19327994). However, another study shows that ced-9 is involved in regulating mitochondrial dynamics (PubMed:21949250).</text>
</comment>
<feature type="chain" id="PRO_0000143097" description="Apoptosis regulator ced-9">
    <location>
        <begin position="1"/>
        <end position="280"/>
    </location>
</feature>
<feature type="region of interest" description="Disordered" evidence="3">
    <location>
        <begin position="33"/>
        <end position="59"/>
    </location>
</feature>
<feature type="short sequence motif" description="BH4" evidence="2">
    <location>
        <begin position="80"/>
        <end position="99"/>
    </location>
</feature>
<feature type="short sequence motif" description="BH1" evidence="1">
    <location>
        <begin position="160"/>
        <end position="179"/>
    </location>
</feature>
<feature type="short sequence motif" description="BH2" evidence="19">
    <location>
        <begin position="213"/>
        <end position="229"/>
    </location>
</feature>
<feature type="compositionally biased region" description="Polar residues" evidence="3">
    <location>
        <begin position="43"/>
        <end position="59"/>
    </location>
</feature>
<feature type="mutagenesis site" description="In n2812; significantly reduces localization of drp-1 to mitochondria. No effect on mitochondrial dynamics and morphology during early embryonic development." evidence="11 12">
    <location>
        <begin position="46"/>
        <end position="280"/>
    </location>
</feature>
<feature type="mutagenesis site" description="In n1653; no effect on the interaction with ced-4. Normal elimination of presynaptic components in RME neurons in adults. No effect on mitochondrial dynamics and morphology during early embryonic development." evidence="11 14 16">
    <original>Y</original>
    <variation>N</variation>
    <location>
        <position position="149"/>
    </location>
</feature>
<feature type="mutagenesis site" description="Significantly reduced interaction with drp-1 in vitro." evidence="12">
    <original>NAQ</original>
    <variation>AGA</variation>
    <location>
        <begin position="158"/>
        <end position="160"/>
    </location>
</feature>
<feature type="mutagenesis site" description="In n1950; gain of function mutant. No effect on the interaction with ced-4. Impaired elimination of presynaptic components in RME neurons in adults. Abnormal accumulation of F-actin at the non-eliminated transient synapses in DD neuron dorsal cord in L4 larvae. No effect on mitochondrial dynamics and morphology during early embryonic development." evidence="11 14 16">
    <original>G</original>
    <variation>E</variation>
    <location>
        <position position="169"/>
    </location>
</feature>
<feature type="mutagenesis site" description="Significantly reduced interaction with drp-1 in vitro." evidence="12">
    <original>RN</original>
    <variation>EG</variation>
    <location>
        <begin position="211"/>
        <end position="212"/>
    </location>
</feature>
<feature type="helix" evidence="21">
    <location>
        <begin position="72"/>
        <end position="74"/>
    </location>
</feature>
<feature type="helix" evidence="20">
    <location>
        <begin position="76"/>
        <end position="78"/>
    </location>
</feature>
<feature type="helix" evidence="20">
    <location>
        <begin position="80"/>
        <end position="94"/>
    </location>
</feature>
<feature type="helix" evidence="20">
    <location>
        <begin position="111"/>
        <end position="138"/>
    </location>
</feature>
<feature type="strand" evidence="20">
    <location>
        <begin position="140"/>
        <end position="143"/>
    </location>
</feature>
<feature type="helix" evidence="20">
    <location>
        <begin position="146"/>
        <end position="153"/>
    </location>
</feature>
<feature type="turn" evidence="21">
    <location>
        <begin position="154"/>
        <end position="157"/>
    </location>
</feature>
<feature type="strand" evidence="20">
    <location>
        <begin position="161"/>
        <end position="163"/>
    </location>
</feature>
<feature type="helix" evidence="20">
    <location>
        <begin position="168"/>
        <end position="185"/>
    </location>
</feature>
<feature type="turn" evidence="20">
    <location>
        <begin position="189"/>
        <end position="191"/>
    </location>
</feature>
<feature type="helix" evidence="20">
    <location>
        <begin position="192"/>
        <end position="194"/>
    </location>
</feature>
<feature type="helix" evidence="20">
    <location>
        <begin position="195"/>
        <end position="211"/>
    </location>
</feature>
<feature type="helix" evidence="20">
    <location>
        <begin position="214"/>
        <end position="217"/>
    </location>
</feature>
<feature type="helix" evidence="20">
    <location>
        <begin position="221"/>
        <end position="239"/>
    </location>
</feature>
<proteinExistence type="evidence at protein level"/>
<protein>
    <recommendedName>
        <fullName>Apoptosis regulator ced-9</fullName>
    </recommendedName>
    <alternativeName>
        <fullName>Cell death protein 9</fullName>
    </alternativeName>
</protein>
<name>CED9_CAEEL</name>